<organism>
    <name type="scientific">Bos taurus</name>
    <name type="common">Bovine</name>
    <dbReference type="NCBI Taxonomy" id="9913"/>
    <lineage>
        <taxon>Eukaryota</taxon>
        <taxon>Metazoa</taxon>
        <taxon>Chordata</taxon>
        <taxon>Craniata</taxon>
        <taxon>Vertebrata</taxon>
        <taxon>Euteleostomi</taxon>
        <taxon>Mammalia</taxon>
        <taxon>Eutheria</taxon>
        <taxon>Laurasiatheria</taxon>
        <taxon>Artiodactyla</taxon>
        <taxon>Ruminantia</taxon>
        <taxon>Pecora</taxon>
        <taxon>Bovidae</taxon>
        <taxon>Bovinae</taxon>
        <taxon>Bos</taxon>
    </lineage>
</organism>
<evidence type="ECO:0000250" key="1">
    <source>
        <dbReference type="UniProtKB" id="P10175"/>
    </source>
</evidence>
<evidence type="ECO:0000250" key="2">
    <source>
        <dbReference type="UniProtKB" id="P10176"/>
    </source>
</evidence>
<evidence type="ECO:0000269" key="3">
    <source>
    </source>
</evidence>
<evidence type="ECO:0000269" key="4">
    <source>
    </source>
</evidence>
<evidence type="ECO:0000305" key="5"/>
<feature type="transit peptide" description="Mitochondrion" evidence="3 4">
    <location>
        <begin position="1"/>
        <end position="25"/>
    </location>
</feature>
<feature type="chain" id="PRO_0000006182" description="Cytochrome c oxidase subunit 8A, mitochondrial">
    <location>
        <begin position="26"/>
        <end position="69"/>
    </location>
</feature>
<feature type="topological domain" description="Mitochondrial matrix" evidence="2">
    <location>
        <begin position="26"/>
        <end position="36"/>
    </location>
</feature>
<feature type="transmembrane region" description="Helical" evidence="1">
    <location>
        <begin position="37"/>
        <end position="60"/>
    </location>
</feature>
<feature type="topological domain" description="Mitochondrial intermembrane" evidence="2">
    <location>
        <begin position="61"/>
        <end position="69"/>
    </location>
</feature>
<feature type="short sequence motif" description="SIFI-degron" evidence="2">
    <location>
        <begin position="2"/>
        <end position="19"/>
    </location>
</feature>
<feature type="sequence conflict" description="In Ref. 2; AAI08171." evidence="5" ref="2">
    <original>V</original>
    <variation>E</variation>
    <location>
        <position position="3"/>
    </location>
</feature>
<feature type="sequence conflict" description="In Ref. 3; AA sequence." evidence="5" ref="3">
    <original>D</original>
    <variation>I</variation>
    <location>
        <position position="39"/>
    </location>
</feature>
<feature type="sequence conflict" description="In Ref. 3; AA sequence." evidence="5" ref="3">
    <original>C</original>
    <variation>D</variation>
    <location>
        <position position="50"/>
    </location>
</feature>
<proteinExistence type="evidence at protein level"/>
<keyword id="KW-0903">Direct protein sequencing</keyword>
<keyword id="KW-0472">Membrane</keyword>
<keyword id="KW-0496">Mitochondrion</keyword>
<keyword id="KW-0999">Mitochondrion inner membrane</keyword>
<keyword id="KW-1185">Reference proteome</keyword>
<keyword id="KW-0809">Transit peptide</keyword>
<keyword id="KW-0812">Transmembrane</keyword>
<keyword id="KW-1133">Transmembrane helix</keyword>
<keyword id="KW-0832">Ubl conjugation</keyword>
<name>COX8A_BOVIN</name>
<dbReference type="EMBL" id="J05201">
    <property type="protein sequence ID" value="AAA30467.1"/>
    <property type="molecule type" value="mRNA"/>
</dbReference>
<dbReference type="EMBL" id="BC108170">
    <property type="protein sequence ID" value="AAI08171.1"/>
    <property type="molecule type" value="mRNA"/>
</dbReference>
<dbReference type="PIR" id="B35537">
    <property type="entry name" value="B35537"/>
</dbReference>
<dbReference type="RefSeq" id="NP_776449.2">
    <property type="nucleotide sequence ID" value="NM_174024.2"/>
</dbReference>
<dbReference type="SMR" id="P14622"/>
<dbReference type="CORUM" id="P14622"/>
<dbReference type="FunCoup" id="P14622">
    <property type="interactions" value="588"/>
</dbReference>
<dbReference type="STRING" id="9913.ENSBTAP00000066680"/>
<dbReference type="PaxDb" id="9913-ENSBTAP00000048633"/>
<dbReference type="Ensembl" id="ENSBTAT00000071400.2">
    <property type="protein sequence ID" value="ENSBTAP00000066680.1"/>
    <property type="gene ID" value="ENSBTAG00000052272.2"/>
</dbReference>
<dbReference type="GeneID" id="281091"/>
<dbReference type="KEGG" id="bta:281091"/>
<dbReference type="CTD" id="1351"/>
<dbReference type="VEuPathDB" id="HostDB:ENSBTAG00000052272"/>
<dbReference type="eggNOG" id="ENOG502SA62">
    <property type="taxonomic scope" value="Eukaryota"/>
</dbReference>
<dbReference type="GeneTree" id="ENSGT00390000006255"/>
<dbReference type="InParanoid" id="P14622"/>
<dbReference type="OMA" id="AQVHSMP"/>
<dbReference type="OrthoDB" id="8931496at2759"/>
<dbReference type="UniPathway" id="UPA00705"/>
<dbReference type="Proteomes" id="UP000009136">
    <property type="component" value="Chromosome 29"/>
</dbReference>
<dbReference type="Bgee" id="ENSBTAG00000052272">
    <property type="expression patterns" value="Expressed in temporal cortex and 105 other cell types or tissues"/>
</dbReference>
<dbReference type="GO" id="GO:0005743">
    <property type="term" value="C:mitochondrial inner membrane"/>
    <property type="evidence" value="ECO:0007669"/>
    <property type="project" value="UniProtKB-SubCell"/>
</dbReference>
<dbReference type="GO" id="GO:0005739">
    <property type="term" value="C:mitochondrion"/>
    <property type="evidence" value="ECO:0000318"/>
    <property type="project" value="GO_Central"/>
</dbReference>
<dbReference type="GO" id="GO:0045277">
    <property type="term" value="C:respiratory chain complex IV"/>
    <property type="evidence" value="ECO:0000318"/>
    <property type="project" value="GO_Central"/>
</dbReference>
<dbReference type="GO" id="GO:0006123">
    <property type="term" value="P:mitochondrial electron transport, cytochrome c to oxygen"/>
    <property type="evidence" value="ECO:0007669"/>
    <property type="project" value="InterPro"/>
</dbReference>
<dbReference type="CDD" id="cd00930">
    <property type="entry name" value="Cyt_c_Oxidase_VIII"/>
    <property type="match status" value="1"/>
</dbReference>
<dbReference type="FunFam" id="4.10.81.10:FF:000001">
    <property type="entry name" value="Cytochrome c oxidase subunit 8B, mitochondrial"/>
    <property type="match status" value="1"/>
</dbReference>
<dbReference type="Gene3D" id="4.10.81.10">
    <property type="entry name" value="Cytochrome c oxidase, subunit 8"/>
    <property type="match status" value="1"/>
</dbReference>
<dbReference type="InterPro" id="IPR003205">
    <property type="entry name" value="Cyt_c_oxidase_su8"/>
</dbReference>
<dbReference type="InterPro" id="IPR036548">
    <property type="entry name" value="Cyt_c_oxidase_su8_sf"/>
</dbReference>
<dbReference type="PANTHER" id="PTHR16717">
    <property type="entry name" value="CYTOCHROME C OXIDASE POLYPEPTIDE VIII"/>
    <property type="match status" value="1"/>
</dbReference>
<dbReference type="PANTHER" id="PTHR16717:SF1">
    <property type="entry name" value="CYTOCHROME C OXIDASE SUBUNIT 8A, MITOCHONDRIAL"/>
    <property type="match status" value="1"/>
</dbReference>
<dbReference type="Pfam" id="PF02285">
    <property type="entry name" value="COX8"/>
    <property type="match status" value="1"/>
</dbReference>
<dbReference type="SUPFAM" id="SSF81431">
    <property type="entry name" value="Mitochondrial cytochrome c oxidase subunit VIIIb (aka IX)"/>
    <property type="match status" value="1"/>
</dbReference>
<sequence length="69" mass="7743">MSVLTPLLLRGLTGPARRLPVPRAQIHSKPPREQLGTMDIAIGLTSCFLCFLLPSGWVLSHMENYKKRE</sequence>
<gene>
    <name type="primary">COX8A</name>
    <name type="synonym">COX8</name>
    <name type="synonym">COX8L</name>
</gene>
<accession>P14622</accession>
<accession>Q32PC5</accession>
<protein>
    <recommendedName>
        <fullName>Cytochrome c oxidase subunit 8A, mitochondrial</fullName>
    </recommendedName>
    <alternativeName>
        <fullName>Cytochrome c oxidase polypeptide VIII-liver</fullName>
    </alternativeName>
    <alternativeName>
        <fullName>Cytochrome c oxidase subunit 8-2</fullName>
    </alternativeName>
    <alternativeName>
        <fullName>IX</fullName>
    </alternativeName>
</protein>
<comment type="function">
    <text evidence="1">Component of the cytochrome c oxidase, the last enzyme in the mitochondrial electron transport chain which drives oxidative phosphorylation. The respiratory chain contains 3 multisubunit complexes succinate dehydrogenase (complex II, CII), ubiquinol-cytochrome c oxidoreductase (cytochrome b-c1 complex, complex III, CIII) and cytochrome c oxidase (complex IV, CIV), that cooperate to transfer electrons derived from NADH and succinate to molecular oxygen, creating an electrochemical gradient over the inner membrane that drives transmembrane transport and the ATP synthase. Cytochrome c oxidase is the component of the respiratory chain that catalyzes the reduction of oxygen to water. Electrons originating from reduced cytochrome c in the intermembrane space (IMS) are transferred via the dinuclear copper A center (CU(A)) of subunit 2 and heme A of subunit 1 to the active site in subunit 1, a binuclear center (BNC) formed by heme A3 and copper B (CU(B)). The BNC reduces molecular oxygen to 2 water molecules using 4 electrons from cytochrome c in the IMS and 4 protons from the mitochondrial matrix.</text>
</comment>
<comment type="pathway">
    <text evidence="1">Energy metabolism; oxidative phosphorylation.</text>
</comment>
<comment type="subunit">
    <text evidence="2">Component of the cytochrome c oxidase (complex IV, CIV), a multisubunit enzyme composed of 14 subunits. The complex is composed of a catalytic core of 3 subunits MT-CO1, MT-CO2 and MT-CO3, encoded in the mitochondrial DNA, and 11 supernumerary subunits COX4I1 (or COX4I2), COX5A, COX5B, COX6A2 (or COX6A1), COX6B1 (or COX6B2), COX6C, COX7A1 (or COX7A2), COX7B, COX7C, COX8B and NDUFA4, which are encoded in the nuclear genome (By similarity). The complex exists as a monomer or a dimer and forms supercomplexes (SCs) in the inner mitochondrial membrane with NADH-ubiquinone oxidoreductase (complex I, CI) and ubiquinol-cytochrome c oxidoreductase (cytochrome b-c1 complex, complex III, CIII), resulting in different assemblies (supercomplex SCI(1)III(2)IV(1) and megacomplex MCI(2)III(2)IV(2)) (By similarity).</text>
</comment>
<comment type="subcellular location">
    <subcellularLocation>
        <location evidence="2">Mitochondrion inner membrane</location>
        <topology evidence="2">Single-pass membrane protein</topology>
    </subcellularLocation>
</comment>
<comment type="PTM">
    <text evidence="2">In response to mitochondrial stress, the precursor protein is ubiquitinated by the SIFI complex in the cytoplasm before mitochondrial import, leading to its degradation. Within the SIFI complex, UBR4 initiates ubiquitin chain that are further elongated or branched by KCMF1.</text>
</comment>
<comment type="similarity">
    <text evidence="5">Belongs to the cytochrome c oxidase VIII family.</text>
</comment>
<reference key="1">
    <citation type="journal article" date="1990" name="J. Biol. Chem.">
        <title>Isolation and characterization of the cDNAs encoding two isoforms of subunit CIX of bovine cytochrome c oxidase.</title>
        <authorList>
            <person name="Lightowlers R.N."/>
            <person name="Ewart G.D."/>
            <person name="Aggeler R.J."/>
            <person name="Zhang Y.-Z."/>
            <person name="Calavetta L."/>
            <person name="Capaldi R.A."/>
        </authorList>
    </citation>
    <scope>NUCLEOTIDE SEQUENCE [MRNA]</scope>
    <source>
        <tissue>Liver</tissue>
    </source>
</reference>
<reference key="2">
    <citation type="submission" date="2005-10" db="EMBL/GenBank/DDBJ databases">
        <authorList>
            <consortium name="NIH - Mammalian Gene Collection (MGC) project"/>
        </authorList>
    </citation>
    <scope>NUCLEOTIDE SEQUENCE [LARGE SCALE MRNA]</scope>
    <source>
        <strain>Crossbred X Angus</strain>
        <tissue>Liver</tissue>
    </source>
</reference>
<reference key="3">
    <citation type="journal article" date="1988" name="Biochemistry">
        <title>Tissue-specific differences between heart and liver cytochrome c oxidase.</title>
        <authorList>
            <person name="Yanamura W."/>
            <person name="Zhang Y.-Z."/>
            <person name="Takamiya S."/>
            <person name="Capaldi R.A."/>
        </authorList>
    </citation>
    <scope>PROTEIN SEQUENCE OF 26-69</scope>
    <source>
        <tissue>Liver</tissue>
    </source>
</reference>
<reference key="4">
    <citation type="journal article" date="1990" name="FEBS Lett.">
        <title>Different isozymes of cytochrome c oxidase are expressed in bovine smooth muscle and skeletal or heart muscle.</title>
        <authorList>
            <person name="Anthony G."/>
            <person name="Stroh A."/>
            <person name="Lottspeich F."/>
            <person name="Kadenbach B."/>
        </authorList>
    </citation>
    <scope>PROTEIN SEQUENCE OF 26-31</scope>
</reference>